<protein>
    <recommendedName>
        <fullName>Cysteine-rich hydrophobic domain-containing protein 1</fullName>
    </recommendedName>
    <alternativeName>
        <fullName>Brain X-linked protein</fullName>
    </alternativeName>
</protein>
<evidence type="ECO:0000250" key="1"/>
<evidence type="ECO:0000255" key="2"/>
<evidence type="ECO:0000256" key="3">
    <source>
        <dbReference type="SAM" id="MobiDB-lite"/>
    </source>
</evidence>
<evidence type="ECO:0000269" key="4">
    <source>
    </source>
</evidence>
<evidence type="ECO:0000303" key="5">
    <source>
    </source>
</evidence>
<evidence type="ECO:0000303" key="6">
    <source>
    </source>
</evidence>
<evidence type="ECO:0000305" key="7"/>
<accession>Q5VXU3</accession>
<accession>A0PJZ2</accession>
<accession>B0QZ87</accession>
<accession>B9EGS5</accession>
<accession>Q5CZ84</accession>
<organism>
    <name type="scientific">Homo sapiens</name>
    <name type="common">Human</name>
    <dbReference type="NCBI Taxonomy" id="9606"/>
    <lineage>
        <taxon>Eukaryota</taxon>
        <taxon>Metazoa</taxon>
        <taxon>Chordata</taxon>
        <taxon>Craniata</taxon>
        <taxon>Vertebrata</taxon>
        <taxon>Euteleostomi</taxon>
        <taxon>Mammalia</taxon>
        <taxon>Eutheria</taxon>
        <taxon>Euarchontoglires</taxon>
        <taxon>Primates</taxon>
        <taxon>Haplorrhini</taxon>
        <taxon>Catarrhini</taxon>
        <taxon>Hominidae</taxon>
        <taxon>Homo</taxon>
    </lineage>
</organism>
<proteinExistence type="evidence at protein level"/>
<keyword id="KW-0025">Alternative splicing</keyword>
<keyword id="KW-1003">Cell membrane</keyword>
<keyword id="KW-0175">Coiled coil</keyword>
<keyword id="KW-0968">Cytoplasmic vesicle</keyword>
<keyword id="KW-0449">Lipoprotein</keyword>
<keyword id="KW-0472">Membrane</keyword>
<keyword id="KW-0564">Palmitate</keyword>
<keyword id="KW-1267">Proteomics identification</keyword>
<keyword id="KW-1185">Reference proteome</keyword>
<dbReference type="EMBL" id="CR936642">
    <property type="protein sequence ID" value="CAI56782.1"/>
    <property type="molecule type" value="mRNA"/>
</dbReference>
<dbReference type="EMBL" id="AL356513">
    <property type="status" value="NOT_ANNOTATED_CDS"/>
    <property type="molecule type" value="Genomic_DNA"/>
</dbReference>
<dbReference type="EMBL" id="AL358796">
    <property type="status" value="NOT_ANNOTATED_CDS"/>
    <property type="molecule type" value="Genomic_DNA"/>
</dbReference>
<dbReference type="EMBL" id="BC127727">
    <property type="protein sequence ID" value="AAI27728.1"/>
    <property type="molecule type" value="mRNA"/>
</dbReference>
<dbReference type="EMBL" id="BC127728">
    <property type="protein sequence ID" value="AAI27729.1"/>
    <property type="molecule type" value="mRNA"/>
</dbReference>
<dbReference type="EMBL" id="BC136691">
    <property type="protein sequence ID" value="AAI36692.1"/>
    <property type="molecule type" value="mRNA"/>
</dbReference>
<dbReference type="EMBL" id="BC136692">
    <property type="protein sequence ID" value="AAI36693.1"/>
    <property type="molecule type" value="mRNA"/>
</dbReference>
<dbReference type="CCDS" id="CCDS35335.2">
    <molecule id="Q5VXU3-1"/>
</dbReference>
<dbReference type="CCDS" id="CCDS75993.1">
    <molecule id="Q5VXU3-2"/>
</dbReference>
<dbReference type="RefSeq" id="NP_001034929.2">
    <molecule id="Q5VXU3-1"/>
    <property type="nucleotide sequence ID" value="NM_001039840.4"/>
</dbReference>
<dbReference type="RefSeq" id="NP_001287813.1">
    <molecule id="Q5VXU3-2"/>
    <property type="nucleotide sequence ID" value="NM_001300884.1"/>
</dbReference>
<dbReference type="SMR" id="Q5VXU3"/>
<dbReference type="BioGRID" id="119745">
    <property type="interactions" value="19"/>
</dbReference>
<dbReference type="FunCoup" id="Q5VXU3">
    <property type="interactions" value="395"/>
</dbReference>
<dbReference type="IntAct" id="Q5VXU3">
    <property type="interactions" value="12"/>
</dbReference>
<dbReference type="STRING" id="9606.ENSP00000362601"/>
<dbReference type="iPTMnet" id="Q5VXU3"/>
<dbReference type="PhosphoSitePlus" id="Q5VXU3"/>
<dbReference type="BioMuta" id="CHIC1"/>
<dbReference type="DMDM" id="77454562"/>
<dbReference type="MassIVE" id="Q5VXU3"/>
<dbReference type="PaxDb" id="9606-ENSP00000362601"/>
<dbReference type="PeptideAtlas" id="Q5VXU3"/>
<dbReference type="ProteomicsDB" id="65613">
    <molecule id="Q5VXU3-1"/>
</dbReference>
<dbReference type="ProteomicsDB" id="65614">
    <molecule id="Q5VXU3-2"/>
</dbReference>
<dbReference type="Antibodypedia" id="27995">
    <property type="antibodies" value="21 antibodies from 10 providers"/>
</dbReference>
<dbReference type="DNASU" id="53344"/>
<dbReference type="Ensembl" id="ENST00000373502.10">
    <molecule id="Q5VXU3-1"/>
    <property type="protein sequence ID" value="ENSP00000362601.5"/>
    <property type="gene ID" value="ENSG00000204116.12"/>
</dbReference>
<dbReference type="Ensembl" id="ENST00000373504.10">
    <molecule id="Q5VXU3-2"/>
    <property type="protein sequence ID" value="ENSP00000362603.5"/>
    <property type="gene ID" value="ENSG00000204116.12"/>
</dbReference>
<dbReference type="GeneID" id="53344"/>
<dbReference type="KEGG" id="hsa:53344"/>
<dbReference type="MANE-Select" id="ENST00000373502.10">
    <property type="protein sequence ID" value="ENSP00000362601.5"/>
    <property type="RefSeq nucleotide sequence ID" value="NM_001039840.4"/>
    <property type="RefSeq protein sequence ID" value="NP_001034929.2"/>
</dbReference>
<dbReference type="UCSC" id="uc004ebk.5">
    <molecule id="Q5VXU3-1"/>
    <property type="organism name" value="human"/>
</dbReference>
<dbReference type="AGR" id="HGNC:1934"/>
<dbReference type="CTD" id="53344"/>
<dbReference type="DisGeNET" id="53344"/>
<dbReference type="GeneCards" id="CHIC1"/>
<dbReference type="HGNC" id="HGNC:1934">
    <property type="gene designation" value="CHIC1"/>
</dbReference>
<dbReference type="HPA" id="ENSG00000204116">
    <property type="expression patterns" value="Low tissue specificity"/>
</dbReference>
<dbReference type="MIM" id="300922">
    <property type="type" value="gene"/>
</dbReference>
<dbReference type="neXtProt" id="NX_Q5VXU3"/>
<dbReference type="OpenTargets" id="ENSG00000204116"/>
<dbReference type="PharmGKB" id="PA26465"/>
<dbReference type="VEuPathDB" id="HostDB:ENSG00000204116"/>
<dbReference type="eggNOG" id="KOG4101">
    <property type="taxonomic scope" value="Eukaryota"/>
</dbReference>
<dbReference type="GeneTree" id="ENSGT00390000003601"/>
<dbReference type="HOGENOM" id="CLU_100628_0_0_1"/>
<dbReference type="InParanoid" id="Q5VXU3"/>
<dbReference type="OMA" id="NYSMTEY"/>
<dbReference type="OrthoDB" id="67682at2759"/>
<dbReference type="PAN-GO" id="Q5VXU3">
    <property type="GO annotations" value="0 GO annotations based on evolutionary models"/>
</dbReference>
<dbReference type="PhylomeDB" id="Q5VXU3"/>
<dbReference type="TreeFam" id="TF314908"/>
<dbReference type="PathwayCommons" id="Q5VXU3"/>
<dbReference type="BioGRID-ORCS" id="53344">
    <property type="hits" value="11 hits in 773 CRISPR screens"/>
</dbReference>
<dbReference type="ChiTaRS" id="CHIC1">
    <property type="organism name" value="human"/>
</dbReference>
<dbReference type="GenomeRNAi" id="53344"/>
<dbReference type="Pharos" id="Q5VXU3">
    <property type="development level" value="Tdark"/>
</dbReference>
<dbReference type="PRO" id="PR:Q5VXU3"/>
<dbReference type="Proteomes" id="UP000005640">
    <property type="component" value="Chromosome X"/>
</dbReference>
<dbReference type="RNAct" id="Q5VXU3">
    <property type="molecule type" value="protein"/>
</dbReference>
<dbReference type="Bgee" id="ENSG00000204116">
    <property type="expression patterns" value="Expressed in endothelial cell and 186 other cell types or tissues"/>
</dbReference>
<dbReference type="ExpressionAtlas" id="Q5VXU3">
    <property type="expression patterns" value="baseline and differential"/>
</dbReference>
<dbReference type="GO" id="GO:0031410">
    <property type="term" value="C:cytoplasmic vesicle"/>
    <property type="evidence" value="ECO:0007669"/>
    <property type="project" value="UniProtKB-KW"/>
</dbReference>
<dbReference type="GO" id="GO:0005886">
    <property type="term" value="C:plasma membrane"/>
    <property type="evidence" value="ECO:0007669"/>
    <property type="project" value="UniProtKB-SubCell"/>
</dbReference>
<dbReference type="InterPro" id="IPR039735">
    <property type="entry name" value="CHIC1/2"/>
</dbReference>
<dbReference type="InterPro" id="IPR019383">
    <property type="entry name" value="Golgin_A_7/ERF4"/>
</dbReference>
<dbReference type="PANTHER" id="PTHR13005">
    <property type="entry name" value="CYSTEINE-RICH HYDROPHOBIC DOMAIN PROTEIN BRAIN X-LINKED PROTEIN"/>
    <property type="match status" value="1"/>
</dbReference>
<dbReference type="PANTHER" id="PTHR13005:SF2">
    <property type="entry name" value="CYSTEINE-RICH HYDROPHOBIC DOMAIN-CONTAINING PROTEIN 1"/>
    <property type="match status" value="1"/>
</dbReference>
<dbReference type="Pfam" id="PF10256">
    <property type="entry name" value="Erf4"/>
    <property type="match status" value="1"/>
</dbReference>
<sequence length="224" mass="25616">MSILLPNMAEFDTISELEEEEEEEAATSSSSPSSSSSVSGPDDDEEDEEEEEEEEEEEEEEEEEEEEEAPPPPRVVSEEHLRRYAPDPVLVRGAGHITVFGLSNKFDTEFPSVLTGKVAPEEFKTSIGRVNACLKKALPVNVKWLLCGCLCCCCTLGCSLWPVICLNKRTRRSIQKLIEWENNRLYHKLALHWKLTKRKCETSNMMEYVILIEFLPKYPIFRPD</sequence>
<gene>
    <name type="primary">CHIC1</name>
    <name type="synonym">BRX</name>
</gene>
<name>CHIC1_HUMAN</name>
<feature type="chain" id="PRO_0000189554" description="Cysteine-rich hydrophobic domain-containing protein 1">
    <location>
        <begin position="1"/>
        <end position="224"/>
    </location>
</feature>
<feature type="region of interest" description="Disordered" evidence="3">
    <location>
        <begin position="1"/>
        <end position="80"/>
    </location>
</feature>
<feature type="coiled-coil region" evidence="2">
    <location>
        <begin position="42"/>
        <end position="70"/>
    </location>
</feature>
<feature type="compositionally biased region" description="Acidic residues" evidence="3">
    <location>
        <begin position="13"/>
        <end position="25"/>
    </location>
</feature>
<feature type="compositionally biased region" description="Low complexity" evidence="3">
    <location>
        <begin position="26"/>
        <end position="40"/>
    </location>
</feature>
<feature type="compositionally biased region" description="Acidic residues" evidence="3">
    <location>
        <begin position="41"/>
        <end position="69"/>
    </location>
</feature>
<feature type="splice variant" id="VSP_034830" description="In isoform 2." evidence="5 6">
    <location>
        <begin position="189"/>
        <end position="208"/>
    </location>
</feature>
<reference key="1">
    <citation type="journal article" date="2007" name="BMC Genomics">
        <title>The full-ORF clone resource of the German cDNA consortium.</title>
        <authorList>
            <person name="Bechtel S."/>
            <person name="Rosenfelder H."/>
            <person name="Duda A."/>
            <person name="Schmidt C.P."/>
            <person name="Ernst U."/>
            <person name="Wellenreuther R."/>
            <person name="Mehrle A."/>
            <person name="Schuster C."/>
            <person name="Bahr A."/>
            <person name="Bloecker H."/>
            <person name="Heubner D."/>
            <person name="Hoerlein A."/>
            <person name="Michel G."/>
            <person name="Wedler H."/>
            <person name="Koehrer K."/>
            <person name="Ottenwaelder B."/>
            <person name="Poustka A."/>
            <person name="Wiemann S."/>
            <person name="Schupp I."/>
        </authorList>
    </citation>
    <scope>NUCLEOTIDE SEQUENCE [LARGE SCALE MRNA] (ISOFORM 2)</scope>
    <source>
        <tissue>Amygdala</tissue>
    </source>
</reference>
<reference key="2">
    <citation type="journal article" date="2005" name="Nature">
        <title>The DNA sequence of the human X chromosome.</title>
        <authorList>
            <person name="Ross M.T."/>
            <person name="Grafham D.V."/>
            <person name="Coffey A.J."/>
            <person name="Scherer S."/>
            <person name="McLay K."/>
            <person name="Muzny D."/>
            <person name="Platzer M."/>
            <person name="Howell G.R."/>
            <person name="Burrows C."/>
            <person name="Bird C.P."/>
            <person name="Frankish A."/>
            <person name="Lovell F.L."/>
            <person name="Howe K.L."/>
            <person name="Ashurst J.L."/>
            <person name="Fulton R.S."/>
            <person name="Sudbrak R."/>
            <person name="Wen G."/>
            <person name="Jones M.C."/>
            <person name="Hurles M.E."/>
            <person name="Andrews T.D."/>
            <person name="Scott C.E."/>
            <person name="Searle S."/>
            <person name="Ramser J."/>
            <person name="Whittaker A."/>
            <person name="Deadman R."/>
            <person name="Carter N.P."/>
            <person name="Hunt S.E."/>
            <person name="Chen R."/>
            <person name="Cree A."/>
            <person name="Gunaratne P."/>
            <person name="Havlak P."/>
            <person name="Hodgson A."/>
            <person name="Metzker M.L."/>
            <person name="Richards S."/>
            <person name="Scott G."/>
            <person name="Steffen D."/>
            <person name="Sodergren E."/>
            <person name="Wheeler D.A."/>
            <person name="Worley K.C."/>
            <person name="Ainscough R."/>
            <person name="Ambrose K.D."/>
            <person name="Ansari-Lari M.A."/>
            <person name="Aradhya S."/>
            <person name="Ashwell R.I."/>
            <person name="Babbage A.K."/>
            <person name="Bagguley C.L."/>
            <person name="Ballabio A."/>
            <person name="Banerjee R."/>
            <person name="Barker G.E."/>
            <person name="Barlow K.F."/>
            <person name="Barrett I.P."/>
            <person name="Bates K.N."/>
            <person name="Beare D.M."/>
            <person name="Beasley H."/>
            <person name="Beasley O."/>
            <person name="Beck A."/>
            <person name="Bethel G."/>
            <person name="Blechschmidt K."/>
            <person name="Brady N."/>
            <person name="Bray-Allen S."/>
            <person name="Bridgeman A.M."/>
            <person name="Brown A.J."/>
            <person name="Brown M.J."/>
            <person name="Bonnin D."/>
            <person name="Bruford E.A."/>
            <person name="Buhay C."/>
            <person name="Burch P."/>
            <person name="Burford D."/>
            <person name="Burgess J."/>
            <person name="Burrill W."/>
            <person name="Burton J."/>
            <person name="Bye J.M."/>
            <person name="Carder C."/>
            <person name="Carrel L."/>
            <person name="Chako J."/>
            <person name="Chapman J.C."/>
            <person name="Chavez D."/>
            <person name="Chen E."/>
            <person name="Chen G."/>
            <person name="Chen Y."/>
            <person name="Chen Z."/>
            <person name="Chinault C."/>
            <person name="Ciccodicola A."/>
            <person name="Clark S.Y."/>
            <person name="Clarke G."/>
            <person name="Clee C.M."/>
            <person name="Clegg S."/>
            <person name="Clerc-Blankenburg K."/>
            <person name="Clifford K."/>
            <person name="Cobley V."/>
            <person name="Cole C.G."/>
            <person name="Conquer J.S."/>
            <person name="Corby N."/>
            <person name="Connor R.E."/>
            <person name="David R."/>
            <person name="Davies J."/>
            <person name="Davis C."/>
            <person name="Davis J."/>
            <person name="Delgado O."/>
            <person name="Deshazo D."/>
            <person name="Dhami P."/>
            <person name="Ding Y."/>
            <person name="Dinh H."/>
            <person name="Dodsworth S."/>
            <person name="Draper H."/>
            <person name="Dugan-Rocha S."/>
            <person name="Dunham A."/>
            <person name="Dunn M."/>
            <person name="Durbin K.J."/>
            <person name="Dutta I."/>
            <person name="Eades T."/>
            <person name="Ellwood M."/>
            <person name="Emery-Cohen A."/>
            <person name="Errington H."/>
            <person name="Evans K.L."/>
            <person name="Faulkner L."/>
            <person name="Francis F."/>
            <person name="Frankland J."/>
            <person name="Fraser A.E."/>
            <person name="Galgoczy P."/>
            <person name="Gilbert J."/>
            <person name="Gill R."/>
            <person name="Gloeckner G."/>
            <person name="Gregory S.G."/>
            <person name="Gribble S."/>
            <person name="Griffiths C."/>
            <person name="Grocock R."/>
            <person name="Gu Y."/>
            <person name="Gwilliam R."/>
            <person name="Hamilton C."/>
            <person name="Hart E.A."/>
            <person name="Hawes A."/>
            <person name="Heath P.D."/>
            <person name="Heitmann K."/>
            <person name="Hennig S."/>
            <person name="Hernandez J."/>
            <person name="Hinzmann B."/>
            <person name="Ho S."/>
            <person name="Hoffs M."/>
            <person name="Howden P.J."/>
            <person name="Huckle E.J."/>
            <person name="Hume J."/>
            <person name="Hunt P.J."/>
            <person name="Hunt A.R."/>
            <person name="Isherwood J."/>
            <person name="Jacob L."/>
            <person name="Johnson D."/>
            <person name="Jones S."/>
            <person name="de Jong P.J."/>
            <person name="Joseph S.S."/>
            <person name="Keenan S."/>
            <person name="Kelly S."/>
            <person name="Kershaw J.K."/>
            <person name="Khan Z."/>
            <person name="Kioschis P."/>
            <person name="Klages S."/>
            <person name="Knights A.J."/>
            <person name="Kosiura A."/>
            <person name="Kovar-Smith C."/>
            <person name="Laird G.K."/>
            <person name="Langford C."/>
            <person name="Lawlor S."/>
            <person name="Leversha M."/>
            <person name="Lewis L."/>
            <person name="Liu W."/>
            <person name="Lloyd C."/>
            <person name="Lloyd D.M."/>
            <person name="Loulseged H."/>
            <person name="Loveland J.E."/>
            <person name="Lovell J.D."/>
            <person name="Lozado R."/>
            <person name="Lu J."/>
            <person name="Lyne R."/>
            <person name="Ma J."/>
            <person name="Maheshwari M."/>
            <person name="Matthews L.H."/>
            <person name="McDowall J."/>
            <person name="McLaren S."/>
            <person name="McMurray A."/>
            <person name="Meidl P."/>
            <person name="Meitinger T."/>
            <person name="Milne S."/>
            <person name="Miner G."/>
            <person name="Mistry S.L."/>
            <person name="Morgan M."/>
            <person name="Morris S."/>
            <person name="Mueller I."/>
            <person name="Mullikin J.C."/>
            <person name="Nguyen N."/>
            <person name="Nordsiek G."/>
            <person name="Nyakatura G."/>
            <person name="O'dell C.N."/>
            <person name="Okwuonu G."/>
            <person name="Palmer S."/>
            <person name="Pandian R."/>
            <person name="Parker D."/>
            <person name="Parrish J."/>
            <person name="Pasternak S."/>
            <person name="Patel D."/>
            <person name="Pearce A.V."/>
            <person name="Pearson D.M."/>
            <person name="Pelan S.E."/>
            <person name="Perez L."/>
            <person name="Porter K.M."/>
            <person name="Ramsey Y."/>
            <person name="Reichwald K."/>
            <person name="Rhodes S."/>
            <person name="Ridler K.A."/>
            <person name="Schlessinger D."/>
            <person name="Schueler M.G."/>
            <person name="Sehra H.K."/>
            <person name="Shaw-Smith C."/>
            <person name="Shen H."/>
            <person name="Sheridan E.M."/>
            <person name="Shownkeen R."/>
            <person name="Skuce C.D."/>
            <person name="Smith M.L."/>
            <person name="Sotheran E.C."/>
            <person name="Steingruber H.E."/>
            <person name="Steward C.A."/>
            <person name="Storey R."/>
            <person name="Swann R.M."/>
            <person name="Swarbreck D."/>
            <person name="Tabor P.E."/>
            <person name="Taudien S."/>
            <person name="Taylor T."/>
            <person name="Teague B."/>
            <person name="Thomas K."/>
            <person name="Thorpe A."/>
            <person name="Timms K."/>
            <person name="Tracey A."/>
            <person name="Trevanion S."/>
            <person name="Tromans A.C."/>
            <person name="d'Urso M."/>
            <person name="Verduzco D."/>
            <person name="Villasana D."/>
            <person name="Waldron L."/>
            <person name="Wall M."/>
            <person name="Wang Q."/>
            <person name="Warren J."/>
            <person name="Warry G.L."/>
            <person name="Wei X."/>
            <person name="West A."/>
            <person name="Whitehead S.L."/>
            <person name="Whiteley M.N."/>
            <person name="Wilkinson J.E."/>
            <person name="Willey D.L."/>
            <person name="Williams G."/>
            <person name="Williams L."/>
            <person name="Williamson A."/>
            <person name="Williamson H."/>
            <person name="Wilming L."/>
            <person name="Woodmansey R.L."/>
            <person name="Wray P.W."/>
            <person name="Yen J."/>
            <person name="Zhang J."/>
            <person name="Zhou J."/>
            <person name="Zoghbi H."/>
            <person name="Zorilla S."/>
            <person name="Buck D."/>
            <person name="Reinhardt R."/>
            <person name="Poustka A."/>
            <person name="Rosenthal A."/>
            <person name="Lehrach H."/>
            <person name="Meindl A."/>
            <person name="Minx P.J."/>
            <person name="Hillier L.W."/>
            <person name="Willard H.F."/>
            <person name="Wilson R.K."/>
            <person name="Waterston R.H."/>
            <person name="Rice C.M."/>
            <person name="Vaudin M."/>
            <person name="Coulson A."/>
            <person name="Nelson D.L."/>
            <person name="Weinstock G."/>
            <person name="Sulston J.E."/>
            <person name="Durbin R.M."/>
            <person name="Hubbard T."/>
            <person name="Gibbs R.A."/>
            <person name="Beck S."/>
            <person name="Rogers J."/>
            <person name="Bentley D.R."/>
        </authorList>
    </citation>
    <scope>NUCLEOTIDE SEQUENCE [LARGE SCALE GENOMIC DNA]</scope>
</reference>
<reference key="3">
    <citation type="journal article" date="2004" name="Genome Res.">
        <title>The status, quality, and expansion of the NIH full-length cDNA project: the Mammalian Gene Collection (MGC).</title>
        <authorList>
            <consortium name="The MGC Project Team"/>
        </authorList>
    </citation>
    <scope>NUCLEOTIDE SEQUENCE [LARGE SCALE MRNA] (ISOFORMS 1 AND 2)</scope>
    <source>
        <tissue>Testis</tissue>
    </source>
</reference>
<reference key="4">
    <citation type="journal article" date="1997" name="Mamm. Genome">
        <title>Localization and expression analysis of a novel conserved brain expressed transcript, Brx/BRX, lying within the Xic/XIC candidate region.</title>
        <authorList>
            <person name="Simmler M.-C."/>
            <person name="Heard E."/>
            <person name="Rougeulle C."/>
            <person name="Cruaud C."/>
            <person name="Weissenbach J."/>
            <person name="Avner P."/>
        </authorList>
    </citation>
    <scope>TISSUE SPECIFICITY</scope>
</reference>
<comment type="subcellular location">
    <subcellularLocation>
        <location evidence="1">Cell membrane</location>
    </subcellularLocation>
    <subcellularLocation>
        <location evidence="1">Cytoplasmic vesicle</location>
    </subcellularLocation>
    <text evidence="1">Also present at a Golgi-like vesicular compartment and at scattered vesicles.</text>
</comment>
<comment type="alternative products">
    <event type="alternative splicing"/>
    <isoform>
        <id>Q5VXU3-1</id>
        <name>1</name>
        <sequence type="displayed"/>
    </isoform>
    <isoform>
        <id>Q5VXU3-2</id>
        <name>2</name>
        <sequence type="described" ref="VSP_034830"/>
    </isoform>
</comment>
<comment type="tissue specificity">
    <text evidence="4">Equally expressed in various parts of the brain.</text>
</comment>
<comment type="PTM">
    <text evidence="1">Palmitoylated.</text>
</comment>
<comment type="similarity">
    <text evidence="7">Belongs to the CHIC family.</text>
</comment>
<comment type="caution">
    <text evidence="7">It is uncertain whether Met-1 or Met-8 is the initiator.</text>
</comment>